<comment type="similarity">
    <text evidence="1">Belongs to the UPF0145 family.</text>
</comment>
<proteinExistence type="inferred from homology"/>
<feature type="chain" id="PRO_1000120020" description="UPF0145 protein THA_1434">
    <location>
        <begin position="1"/>
        <end position="108"/>
    </location>
</feature>
<protein>
    <recommendedName>
        <fullName evidence="1">UPF0145 protein THA_1434</fullName>
    </recommendedName>
</protein>
<evidence type="ECO:0000255" key="1">
    <source>
        <dbReference type="HAMAP-Rule" id="MF_00338"/>
    </source>
</evidence>
<sequence>MIITTTENIHGYEIVEILGIVMGNIVQSKHLGKDIAAAFKTLAGGEIKAYTEMMTEARNKAIERMIDEAEKIGADAVVNVRFSSSSVMSGAAEMLAYGTAVKIKKSNE</sequence>
<gene>
    <name type="ordered locus">THA_1434</name>
</gene>
<keyword id="KW-1185">Reference proteome</keyword>
<dbReference type="EMBL" id="CP001185">
    <property type="protein sequence ID" value="ACJ75878.1"/>
    <property type="molecule type" value="Genomic_DNA"/>
</dbReference>
<dbReference type="RefSeq" id="WP_004101860.1">
    <property type="nucleotide sequence ID" value="NC_011653.1"/>
</dbReference>
<dbReference type="SMR" id="B7ID01"/>
<dbReference type="STRING" id="484019.THA_1434"/>
<dbReference type="KEGG" id="taf:THA_1434"/>
<dbReference type="eggNOG" id="COG0393">
    <property type="taxonomic scope" value="Bacteria"/>
</dbReference>
<dbReference type="HOGENOM" id="CLU_117144_1_2_0"/>
<dbReference type="OrthoDB" id="9796448at2"/>
<dbReference type="Proteomes" id="UP000002453">
    <property type="component" value="Chromosome"/>
</dbReference>
<dbReference type="Gene3D" id="3.30.110.70">
    <property type="entry name" value="Hypothetical protein apc22750. Chain B"/>
    <property type="match status" value="1"/>
</dbReference>
<dbReference type="HAMAP" id="MF_00338">
    <property type="entry name" value="UPF0145"/>
    <property type="match status" value="1"/>
</dbReference>
<dbReference type="InterPro" id="IPR035439">
    <property type="entry name" value="UPF0145_dom_sf"/>
</dbReference>
<dbReference type="InterPro" id="IPR002765">
    <property type="entry name" value="UPF0145_YbjQ-like"/>
</dbReference>
<dbReference type="PANTHER" id="PTHR34068:SF2">
    <property type="entry name" value="UPF0145 PROTEIN SCO3412"/>
    <property type="match status" value="1"/>
</dbReference>
<dbReference type="PANTHER" id="PTHR34068">
    <property type="entry name" value="UPF0145 PROTEIN YBJQ"/>
    <property type="match status" value="1"/>
</dbReference>
<dbReference type="Pfam" id="PF01906">
    <property type="entry name" value="YbjQ_1"/>
    <property type="match status" value="1"/>
</dbReference>
<dbReference type="SUPFAM" id="SSF117782">
    <property type="entry name" value="YbjQ-like"/>
    <property type="match status" value="1"/>
</dbReference>
<organism>
    <name type="scientific">Thermosipho africanus (strain TCF52B)</name>
    <dbReference type="NCBI Taxonomy" id="484019"/>
    <lineage>
        <taxon>Bacteria</taxon>
        <taxon>Thermotogati</taxon>
        <taxon>Thermotogota</taxon>
        <taxon>Thermotogae</taxon>
        <taxon>Thermotogales</taxon>
        <taxon>Fervidobacteriaceae</taxon>
        <taxon>Thermosipho</taxon>
    </lineage>
</organism>
<reference key="1">
    <citation type="journal article" date="2009" name="J. Bacteriol.">
        <title>The genome of Thermosipho africanus TCF52B: lateral genetic connections to the Firmicutes and Archaea.</title>
        <authorList>
            <person name="Nesboe C.L."/>
            <person name="Bapteste E."/>
            <person name="Curtis B."/>
            <person name="Dahle H."/>
            <person name="Lopez P."/>
            <person name="Macleod D."/>
            <person name="Dlutek M."/>
            <person name="Bowman S."/>
            <person name="Zhaxybayeva O."/>
            <person name="Birkeland N.-K."/>
            <person name="Doolittle W.F."/>
        </authorList>
    </citation>
    <scope>NUCLEOTIDE SEQUENCE [LARGE SCALE GENOMIC DNA]</scope>
    <source>
        <strain>TCF52B</strain>
    </source>
</reference>
<name>Y1434_THEAB</name>
<accession>B7ID01</accession>